<keyword id="KW-0067">ATP-binding</keyword>
<keyword id="KW-0997">Cell inner membrane</keyword>
<keyword id="KW-1003">Cell membrane</keyword>
<keyword id="KW-0378">Hydrolase</keyword>
<keyword id="KW-0472">Membrane</keyword>
<keyword id="KW-0479">Metal-binding</keyword>
<keyword id="KW-0482">Metalloprotease</keyword>
<keyword id="KW-0547">Nucleotide-binding</keyword>
<keyword id="KW-0645">Protease</keyword>
<keyword id="KW-1185">Reference proteome</keyword>
<keyword id="KW-0812">Transmembrane</keyword>
<keyword id="KW-1133">Transmembrane helix</keyword>
<keyword id="KW-0862">Zinc</keyword>
<accession>D0LWB8</accession>
<gene>
    <name evidence="1" type="primary">ftsH</name>
    <name type="ordered locus">Hoch_3548</name>
</gene>
<comment type="function">
    <text evidence="1">Acts as a processive, ATP-dependent zinc metallopeptidase for both cytoplasmic and membrane proteins. Plays a role in the quality control of integral membrane proteins.</text>
</comment>
<comment type="cofactor">
    <cofactor evidence="1">
        <name>Zn(2+)</name>
        <dbReference type="ChEBI" id="CHEBI:29105"/>
    </cofactor>
    <text evidence="1">Binds 1 zinc ion per subunit.</text>
</comment>
<comment type="subunit">
    <text evidence="1">Homohexamer.</text>
</comment>
<comment type="subcellular location">
    <subcellularLocation>
        <location evidence="1">Cell inner membrane</location>
        <topology evidence="1">Multi-pass membrane protein</topology>
        <orientation evidence="1">Cytoplasmic side</orientation>
    </subcellularLocation>
</comment>
<comment type="similarity">
    <text evidence="1">In the central section; belongs to the AAA ATPase family.</text>
</comment>
<comment type="similarity">
    <text evidence="1">In the C-terminal section; belongs to the peptidase M41 family.</text>
</comment>
<reference key="1">
    <citation type="journal article" date="2010" name="Stand. Genomic Sci.">
        <title>Complete genome sequence of Haliangium ochraceum type strain (SMP-2).</title>
        <authorList>
            <person name="Ivanova N."/>
            <person name="Daum C."/>
            <person name="Lang E."/>
            <person name="Abt B."/>
            <person name="Kopitz M."/>
            <person name="Saunders E."/>
            <person name="Lapidus A."/>
            <person name="Lucas S."/>
            <person name="Glavina Del Rio T."/>
            <person name="Nolan M."/>
            <person name="Tice H."/>
            <person name="Copeland A."/>
            <person name="Cheng J.F."/>
            <person name="Chen F."/>
            <person name="Bruce D."/>
            <person name="Goodwin L."/>
            <person name="Pitluck S."/>
            <person name="Mavromatis K."/>
            <person name="Pati A."/>
            <person name="Mikhailova N."/>
            <person name="Chen A."/>
            <person name="Palaniappan K."/>
            <person name="Land M."/>
            <person name="Hauser L."/>
            <person name="Chang Y.J."/>
            <person name="Jeffries C.D."/>
            <person name="Detter J.C."/>
            <person name="Brettin T."/>
            <person name="Rohde M."/>
            <person name="Goker M."/>
            <person name="Bristow J."/>
            <person name="Markowitz V."/>
            <person name="Eisen J.A."/>
            <person name="Hugenholtz P."/>
            <person name="Kyrpides N.C."/>
            <person name="Klenk H.P."/>
        </authorList>
    </citation>
    <scope>NUCLEOTIDE SEQUENCE [LARGE SCALE GENOMIC DNA]</scope>
    <source>
        <strain>DSM 14365 / CIP 107738 / JCM 11303 / AJ 13395 / SMP-2</strain>
    </source>
</reference>
<protein>
    <recommendedName>
        <fullName evidence="1">ATP-dependent zinc metalloprotease FtsH</fullName>
        <ecNumber evidence="1">3.4.24.-</ecNumber>
    </recommendedName>
</protein>
<feature type="chain" id="PRO_5000529594" description="ATP-dependent zinc metalloprotease FtsH">
    <location>
        <begin position="1"/>
        <end position="682"/>
    </location>
</feature>
<feature type="topological domain" description="Cytoplasmic" evidence="1">
    <location>
        <begin position="1"/>
        <end position="7"/>
    </location>
</feature>
<feature type="transmembrane region" description="Helical" evidence="1">
    <location>
        <begin position="8"/>
        <end position="28"/>
    </location>
</feature>
<feature type="topological domain" description="Periplasmic" evidence="1">
    <location>
        <begin position="29"/>
        <end position="138"/>
    </location>
</feature>
<feature type="transmembrane region" description="Helical" evidence="1">
    <location>
        <begin position="139"/>
        <end position="159"/>
    </location>
</feature>
<feature type="topological domain" description="Cytoplasmic" evidence="1">
    <location>
        <begin position="160"/>
        <end position="682"/>
    </location>
</feature>
<feature type="region of interest" description="Disordered" evidence="2">
    <location>
        <begin position="638"/>
        <end position="682"/>
    </location>
</feature>
<feature type="active site" evidence="1">
    <location>
        <position position="455"/>
    </location>
</feature>
<feature type="binding site" evidence="1">
    <location>
        <begin position="232"/>
        <end position="239"/>
    </location>
    <ligand>
        <name>ATP</name>
        <dbReference type="ChEBI" id="CHEBI:30616"/>
    </ligand>
</feature>
<feature type="binding site" evidence="1">
    <location>
        <position position="454"/>
    </location>
    <ligand>
        <name>Zn(2+)</name>
        <dbReference type="ChEBI" id="CHEBI:29105"/>
        <note>catalytic</note>
    </ligand>
</feature>
<feature type="binding site" evidence="1">
    <location>
        <position position="458"/>
    </location>
    <ligand>
        <name>Zn(2+)</name>
        <dbReference type="ChEBI" id="CHEBI:29105"/>
        <note>catalytic</note>
    </ligand>
</feature>
<feature type="binding site" evidence="1">
    <location>
        <position position="531"/>
    </location>
    <ligand>
        <name>Zn(2+)</name>
        <dbReference type="ChEBI" id="CHEBI:29105"/>
        <note>catalytic</note>
    </ligand>
</feature>
<name>FTSH_HALO1</name>
<organism>
    <name type="scientific">Haliangium ochraceum (strain DSM 14365 / JCM 11303 / SMP-2)</name>
    <dbReference type="NCBI Taxonomy" id="502025"/>
    <lineage>
        <taxon>Bacteria</taxon>
        <taxon>Pseudomonadati</taxon>
        <taxon>Myxococcota</taxon>
        <taxon>Polyangia</taxon>
        <taxon>Haliangiales</taxon>
        <taxon>Kofleriaceae</taxon>
        <taxon>Haliangium</taxon>
    </lineage>
</organism>
<dbReference type="EC" id="3.4.24.-" evidence="1"/>
<dbReference type="EMBL" id="CP001804">
    <property type="protein sequence ID" value="ACY16050.1"/>
    <property type="molecule type" value="Genomic_DNA"/>
</dbReference>
<dbReference type="RefSeq" id="WP_012828649.1">
    <property type="nucleotide sequence ID" value="NC_013440.1"/>
</dbReference>
<dbReference type="SMR" id="D0LWB8"/>
<dbReference type="STRING" id="502025.Hoch_3548"/>
<dbReference type="MEROPS" id="M41.001"/>
<dbReference type="KEGG" id="hoh:Hoch_3548"/>
<dbReference type="eggNOG" id="COG0465">
    <property type="taxonomic scope" value="Bacteria"/>
</dbReference>
<dbReference type="HOGENOM" id="CLU_000688_16_0_7"/>
<dbReference type="OrthoDB" id="9809379at2"/>
<dbReference type="Proteomes" id="UP000001880">
    <property type="component" value="Chromosome"/>
</dbReference>
<dbReference type="GO" id="GO:0005886">
    <property type="term" value="C:plasma membrane"/>
    <property type="evidence" value="ECO:0007669"/>
    <property type="project" value="UniProtKB-SubCell"/>
</dbReference>
<dbReference type="GO" id="GO:0005524">
    <property type="term" value="F:ATP binding"/>
    <property type="evidence" value="ECO:0007669"/>
    <property type="project" value="UniProtKB-UniRule"/>
</dbReference>
<dbReference type="GO" id="GO:0016887">
    <property type="term" value="F:ATP hydrolysis activity"/>
    <property type="evidence" value="ECO:0007669"/>
    <property type="project" value="UniProtKB-UniRule"/>
</dbReference>
<dbReference type="GO" id="GO:0004176">
    <property type="term" value="F:ATP-dependent peptidase activity"/>
    <property type="evidence" value="ECO:0007669"/>
    <property type="project" value="InterPro"/>
</dbReference>
<dbReference type="GO" id="GO:0004222">
    <property type="term" value="F:metalloendopeptidase activity"/>
    <property type="evidence" value="ECO:0007669"/>
    <property type="project" value="InterPro"/>
</dbReference>
<dbReference type="GO" id="GO:0008270">
    <property type="term" value="F:zinc ion binding"/>
    <property type="evidence" value="ECO:0007669"/>
    <property type="project" value="UniProtKB-UniRule"/>
</dbReference>
<dbReference type="GO" id="GO:0030163">
    <property type="term" value="P:protein catabolic process"/>
    <property type="evidence" value="ECO:0007669"/>
    <property type="project" value="UniProtKB-UniRule"/>
</dbReference>
<dbReference type="GO" id="GO:0006508">
    <property type="term" value="P:proteolysis"/>
    <property type="evidence" value="ECO:0007669"/>
    <property type="project" value="UniProtKB-KW"/>
</dbReference>
<dbReference type="CDD" id="cd19501">
    <property type="entry name" value="RecA-like_FtsH"/>
    <property type="match status" value="1"/>
</dbReference>
<dbReference type="FunFam" id="1.10.8.60:FF:000001">
    <property type="entry name" value="ATP-dependent zinc metalloprotease FtsH"/>
    <property type="match status" value="1"/>
</dbReference>
<dbReference type="FunFam" id="1.20.58.760:FF:000001">
    <property type="entry name" value="ATP-dependent zinc metalloprotease FtsH"/>
    <property type="match status" value="1"/>
</dbReference>
<dbReference type="FunFam" id="3.40.50.300:FF:000001">
    <property type="entry name" value="ATP-dependent zinc metalloprotease FtsH"/>
    <property type="match status" value="1"/>
</dbReference>
<dbReference type="Gene3D" id="1.10.8.60">
    <property type="match status" value="1"/>
</dbReference>
<dbReference type="Gene3D" id="3.40.50.300">
    <property type="entry name" value="P-loop containing nucleotide triphosphate hydrolases"/>
    <property type="match status" value="1"/>
</dbReference>
<dbReference type="Gene3D" id="1.20.58.760">
    <property type="entry name" value="Peptidase M41"/>
    <property type="match status" value="1"/>
</dbReference>
<dbReference type="HAMAP" id="MF_01458">
    <property type="entry name" value="FtsH"/>
    <property type="match status" value="1"/>
</dbReference>
<dbReference type="InterPro" id="IPR003593">
    <property type="entry name" value="AAA+_ATPase"/>
</dbReference>
<dbReference type="InterPro" id="IPR041569">
    <property type="entry name" value="AAA_lid_3"/>
</dbReference>
<dbReference type="InterPro" id="IPR003959">
    <property type="entry name" value="ATPase_AAA_core"/>
</dbReference>
<dbReference type="InterPro" id="IPR003960">
    <property type="entry name" value="ATPase_AAA_CS"/>
</dbReference>
<dbReference type="InterPro" id="IPR005936">
    <property type="entry name" value="FtsH"/>
</dbReference>
<dbReference type="InterPro" id="IPR027417">
    <property type="entry name" value="P-loop_NTPase"/>
</dbReference>
<dbReference type="InterPro" id="IPR000642">
    <property type="entry name" value="Peptidase_M41"/>
</dbReference>
<dbReference type="InterPro" id="IPR037219">
    <property type="entry name" value="Peptidase_M41-like"/>
</dbReference>
<dbReference type="NCBIfam" id="TIGR01241">
    <property type="entry name" value="FtsH_fam"/>
    <property type="match status" value="1"/>
</dbReference>
<dbReference type="PANTHER" id="PTHR23076:SF97">
    <property type="entry name" value="ATP-DEPENDENT ZINC METALLOPROTEASE YME1L1"/>
    <property type="match status" value="1"/>
</dbReference>
<dbReference type="PANTHER" id="PTHR23076">
    <property type="entry name" value="METALLOPROTEASE M41 FTSH"/>
    <property type="match status" value="1"/>
</dbReference>
<dbReference type="Pfam" id="PF00004">
    <property type="entry name" value="AAA"/>
    <property type="match status" value="1"/>
</dbReference>
<dbReference type="Pfam" id="PF17862">
    <property type="entry name" value="AAA_lid_3"/>
    <property type="match status" value="1"/>
</dbReference>
<dbReference type="Pfam" id="PF01434">
    <property type="entry name" value="Peptidase_M41"/>
    <property type="match status" value="1"/>
</dbReference>
<dbReference type="SMART" id="SM00382">
    <property type="entry name" value="AAA"/>
    <property type="match status" value="1"/>
</dbReference>
<dbReference type="SUPFAM" id="SSF140990">
    <property type="entry name" value="FtsH protease domain-like"/>
    <property type="match status" value="1"/>
</dbReference>
<dbReference type="SUPFAM" id="SSF52540">
    <property type="entry name" value="P-loop containing nucleoside triphosphate hydrolases"/>
    <property type="match status" value="1"/>
</dbReference>
<dbReference type="PROSITE" id="PS00674">
    <property type="entry name" value="AAA"/>
    <property type="match status" value="1"/>
</dbReference>
<sequence length="682" mass="74783">MKQSHKTILLWALLIFLFVMIYNLISDGTSGEETLDTTEFKTLLQARIDERLADAGEGPALSDDRRALAQRAGEIASVTVEPNPNDNATYVLRYEGSGEDGLDPDKKTLVYGEYKGTIENLLTAAGISYEVKAKEESTFWQSLLISWLPMLLLFALFFFFMRQLQAGGGKAMSFGKSKARLLTDHQNKVTFKDVAGVEEAKDEVEEIIAFLKDPKKFTRLGGRIPKGVLMMGPPGTGKTLLARAIAGEAGVPFFSISGSDFVEMFVGVGASRVRDLFEQGKKNAPCIIFIDEIDAVGRHRGAGLGGGHDEREQTLNQLLVEMDGFESNDGVILIAATNRPDVLDPALLRPGRFDRRIIVPRPDLRGRTGILGVHTRKVPLSTEVALEVIARGTPGFSGADLESLVNEAALIAARRDKDRVDMEDFEDAKDKVMMGAERRSMIISDKEKRTTAYHEAGHALVAKLVGAETDPVHKVSIIPRGRALGVTQLLPTEDRLGFTREFALNKIAILMGGRLAEELVLKQKTTGAGDDIDKATDLARRMVTEWGMSDVIGPLNFASGGKQEVFLGRDLPQAEAYSQETAQRIDGEIRRIVTDQYERARRMLEENRDALERVARGLLEYETLDGNDIDTLCQGGRLSRPAVVSKPSADAESSVDEDEREARPALFPPLGKSGTDPEPEPA</sequence>
<proteinExistence type="inferred from homology"/>
<evidence type="ECO:0000255" key="1">
    <source>
        <dbReference type="HAMAP-Rule" id="MF_01458"/>
    </source>
</evidence>
<evidence type="ECO:0000256" key="2">
    <source>
        <dbReference type="SAM" id="MobiDB-lite"/>
    </source>
</evidence>